<dbReference type="EMBL" id="CP000416">
    <property type="protein sequence ID" value="ABJ64749.1"/>
    <property type="molecule type" value="Genomic_DNA"/>
</dbReference>
<dbReference type="SMR" id="Q03PX3"/>
<dbReference type="STRING" id="387344.LVIS_1674"/>
<dbReference type="KEGG" id="lbr:LVIS_1674"/>
<dbReference type="eggNOG" id="COG0256">
    <property type="taxonomic scope" value="Bacteria"/>
</dbReference>
<dbReference type="HOGENOM" id="CLU_098841_0_1_9"/>
<dbReference type="Proteomes" id="UP000001652">
    <property type="component" value="Chromosome"/>
</dbReference>
<dbReference type="GO" id="GO:0022625">
    <property type="term" value="C:cytosolic large ribosomal subunit"/>
    <property type="evidence" value="ECO:0007669"/>
    <property type="project" value="TreeGrafter"/>
</dbReference>
<dbReference type="GO" id="GO:0008097">
    <property type="term" value="F:5S rRNA binding"/>
    <property type="evidence" value="ECO:0007669"/>
    <property type="project" value="TreeGrafter"/>
</dbReference>
<dbReference type="GO" id="GO:0003735">
    <property type="term" value="F:structural constituent of ribosome"/>
    <property type="evidence" value="ECO:0007669"/>
    <property type="project" value="InterPro"/>
</dbReference>
<dbReference type="GO" id="GO:0006412">
    <property type="term" value="P:translation"/>
    <property type="evidence" value="ECO:0007669"/>
    <property type="project" value="UniProtKB-UniRule"/>
</dbReference>
<dbReference type="CDD" id="cd00432">
    <property type="entry name" value="Ribosomal_L18_L5e"/>
    <property type="match status" value="1"/>
</dbReference>
<dbReference type="FunFam" id="3.30.420.100:FF:000001">
    <property type="entry name" value="50S ribosomal protein L18"/>
    <property type="match status" value="1"/>
</dbReference>
<dbReference type="Gene3D" id="3.30.420.100">
    <property type="match status" value="1"/>
</dbReference>
<dbReference type="HAMAP" id="MF_01337_B">
    <property type="entry name" value="Ribosomal_uL18_B"/>
    <property type="match status" value="1"/>
</dbReference>
<dbReference type="InterPro" id="IPR004389">
    <property type="entry name" value="Ribosomal_uL18_bac-type"/>
</dbReference>
<dbReference type="InterPro" id="IPR005484">
    <property type="entry name" value="Ribosomal_uL18_bac/euk"/>
</dbReference>
<dbReference type="NCBIfam" id="TIGR00060">
    <property type="entry name" value="L18_bact"/>
    <property type="match status" value="1"/>
</dbReference>
<dbReference type="PANTHER" id="PTHR12899">
    <property type="entry name" value="39S RIBOSOMAL PROTEIN L18, MITOCHONDRIAL"/>
    <property type="match status" value="1"/>
</dbReference>
<dbReference type="PANTHER" id="PTHR12899:SF3">
    <property type="entry name" value="LARGE RIBOSOMAL SUBUNIT PROTEIN UL18M"/>
    <property type="match status" value="1"/>
</dbReference>
<dbReference type="Pfam" id="PF00861">
    <property type="entry name" value="Ribosomal_L18p"/>
    <property type="match status" value="1"/>
</dbReference>
<dbReference type="SUPFAM" id="SSF53137">
    <property type="entry name" value="Translational machinery components"/>
    <property type="match status" value="1"/>
</dbReference>
<gene>
    <name evidence="1" type="primary">rplR</name>
    <name type="ordered locus">LVIS_1674</name>
</gene>
<sequence length="118" mass="13065">MITKPDKNKTRQKRHIRVRNKISGTAERPRLNVFRSNKNIYAQVIDDVAGVTLVSASTLDSEVAGDNKTDQAKGVGELIAKRAIEKKITNVVFDRGGYLYHGRVQALAEAAREAGLKF</sequence>
<name>RL18_LEVBA</name>
<accession>Q03PX3</accession>
<evidence type="ECO:0000255" key="1">
    <source>
        <dbReference type="HAMAP-Rule" id="MF_01337"/>
    </source>
</evidence>
<evidence type="ECO:0000305" key="2"/>
<proteinExistence type="inferred from homology"/>
<comment type="function">
    <text evidence="1">This is one of the proteins that bind and probably mediate the attachment of the 5S RNA into the large ribosomal subunit, where it forms part of the central protuberance.</text>
</comment>
<comment type="subunit">
    <text evidence="1">Part of the 50S ribosomal subunit; part of the 5S rRNA/L5/L18/L25 subcomplex. Contacts the 5S and 23S rRNAs.</text>
</comment>
<comment type="similarity">
    <text evidence="1">Belongs to the universal ribosomal protein uL18 family.</text>
</comment>
<reference key="1">
    <citation type="journal article" date="2006" name="Proc. Natl. Acad. Sci. U.S.A.">
        <title>Comparative genomics of the lactic acid bacteria.</title>
        <authorList>
            <person name="Makarova K.S."/>
            <person name="Slesarev A."/>
            <person name="Wolf Y.I."/>
            <person name="Sorokin A."/>
            <person name="Mirkin B."/>
            <person name="Koonin E.V."/>
            <person name="Pavlov A."/>
            <person name="Pavlova N."/>
            <person name="Karamychev V."/>
            <person name="Polouchine N."/>
            <person name="Shakhova V."/>
            <person name="Grigoriev I."/>
            <person name="Lou Y."/>
            <person name="Rohksar D."/>
            <person name="Lucas S."/>
            <person name="Huang K."/>
            <person name="Goodstein D.M."/>
            <person name="Hawkins T."/>
            <person name="Plengvidhya V."/>
            <person name="Welker D."/>
            <person name="Hughes J."/>
            <person name="Goh Y."/>
            <person name="Benson A."/>
            <person name="Baldwin K."/>
            <person name="Lee J.-H."/>
            <person name="Diaz-Muniz I."/>
            <person name="Dosti B."/>
            <person name="Smeianov V."/>
            <person name="Wechter W."/>
            <person name="Barabote R."/>
            <person name="Lorca G."/>
            <person name="Altermann E."/>
            <person name="Barrangou R."/>
            <person name="Ganesan B."/>
            <person name="Xie Y."/>
            <person name="Rawsthorne H."/>
            <person name="Tamir D."/>
            <person name="Parker C."/>
            <person name="Breidt F."/>
            <person name="Broadbent J.R."/>
            <person name="Hutkins R."/>
            <person name="O'Sullivan D."/>
            <person name="Steele J."/>
            <person name="Unlu G."/>
            <person name="Saier M.H. Jr."/>
            <person name="Klaenhammer T."/>
            <person name="Richardson P."/>
            <person name="Kozyavkin S."/>
            <person name="Weimer B.C."/>
            <person name="Mills D.A."/>
        </authorList>
    </citation>
    <scope>NUCLEOTIDE SEQUENCE [LARGE SCALE GENOMIC DNA]</scope>
    <source>
        <strain>ATCC 367 / BCRC 12310 / CIP 105137 / JCM 1170 / LMG 11437 / NCIMB 947 / NCTC 947</strain>
    </source>
</reference>
<feature type="chain" id="PRO_1000053042" description="Large ribosomal subunit protein uL18">
    <location>
        <begin position="1"/>
        <end position="118"/>
    </location>
</feature>
<keyword id="KW-1185">Reference proteome</keyword>
<keyword id="KW-0687">Ribonucleoprotein</keyword>
<keyword id="KW-0689">Ribosomal protein</keyword>
<keyword id="KW-0694">RNA-binding</keyword>
<keyword id="KW-0699">rRNA-binding</keyword>
<protein>
    <recommendedName>
        <fullName evidence="1">Large ribosomal subunit protein uL18</fullName>
    </recommendedName>
    <alternativeName>
        <fullName evidence="2">50S ribosomal protein L18</fullName>
    </alternativeName>
</protein>
<organism>
    <name type="scientific">Levilactobacillus brevis (strain ATCC 367 / BCRC 12310 / CIP 105137 / JCM 1170 / LMG 11437 / NCIMB 947 / NCTC 947)</name>
    <name type="common">Lactobacillus brevis</name>
    <dbReference type="NCBI Taxonomy" id="387344"/>
    <lineage>
        <taxon>Bacteria</taxon>
        <taxon>Bacillati</taxon>
        <taxon>Bacillota</taxon>
        <taxon>Bacilli</taxon>
        <taxon>Lactobacillales</taxon>
        <taxon>Lactobacillaceae</taxon>
        <taxon>Levilactobacillus</taxon>
    </lineage>
</organism>